<protein>
    <recommendedName>
        <fullName evidence="1">Phosphoglucosamine mutase</fullName>
        <ecNumber evidence="1">5.4.2.10</ecNumber>
    </recommendedName>
</protein>
<organism>
    <name type="scientific">Lactobacillus gasseri (strain ATCC 33323 / DSM 20243 / BCRC 14619 / CIP 102991 / JCM 1131 / KCTC 3163 / NCIMB 11718 / NCTC 13722 / AM63)</name>
    <dbReference type="NCBI Taxonomy" id="324831"/>
    <lineage>
        <taxon>Bacteria</taxon>
        <taxon>Bacillati</taxon>
        <taxon>Bacillota</taxon>
        <taxon>Bacilli</taxon>
        <taxon>Lactobacillales</taxon>
        <taxon>Lactobacillaceae</taxon>
        <taxon>Lactobacillus</taxon>
    </lineage>
</organism>
<name>GLMM_LACGA</name>
<sequence length="451" mass="49134">MLKYFGTDGVRGVANAGLTPEMAFKLGRDGGYVLTKDKKDGERAKVLVSRDTRISGQMLEYALISGLLSVGIEVLEVGVITTPGLSYLVRAQGADAGVQISASHNPVEDNGIKFFGSDGLKLSDAKEEEIEKLIDAPEDKLPRPSAEGLGTVTNYHEGASKYLQFIENTLPEELGGIKVVVDGANGAASALISRLFADMGVDFTTIATHPNGLNINDHVGATHTKKLQEEVVKQGAQLGLAFDGDADRCIAVDENGNEVDGDHIMYVIGSYLADHGRLKKDTIVTTVMSNLGFTKALERRGLKNVRTQVGDRYVSEEMRANGYNLGGEQSGHVIISDYHNTGDGMLTGLHLLYVMKDTGKSLSELLSDFKEYPQRLINVPVKDKKDWKEHKRITEAIKKVEEELSDEGRIFVRPSGTQSLLRVMTEAPTQELADKYCEEVAKVVEEEMGSK</sequence>
<gene>
    <name evidence="1" type="primary">glmM</name>
    <name type="ordered locus">LGAS_1286</name>
</gene>
<proteinExistence type="inferred from homology"/>
<evidence type="ECO:0000255" key="1">
    <source>
        <dbReference type="HAMAP-Rule" id="MF_01554"/>
    </source>
</evidence>
<feature type="chain" id="PRO_0000301330" description="Phosphoglucosamine mutase">
    <location>
        <begin position="1"/>
        <end position="451"/>
    </location>
</feature>
<feature type="active site" description="Phosphoserine intermediate" evidence="1">
    <location>
        <position position="103"/>
    </location>
</feature>
<feature type="binding site" description="via phosphate group" evidence="1">
    <location>
        <position position="103"/>
    </location>
    <ligand>
        <name>Mg(2+)</name>
        <dbReference type="ChEBI" id="CHEBI:18420"/>
    </ligand>
</feature>
<feature type="binding site" evidence="1">
    <location>
        <position position="243"/>
    </location>
    <ligand>
        <name>Mg(2+)</name>
        <dbReference type="ChEBI" id="CHEBI:18420"/>
    </ligand>
</feature>
<feature type="binding site" evidence="1">
    <location>
        <position position="245"/>
    </location>
    <ligand>
        <name>Mg(2+)</name>
        <dbReference type="ChEBI" id="CHEBI:18420"/>
    </ligand>
</feature>
<feature type="binding site" evidence="1">
    <location>
        <position position="247"/>
    </location>
    <ligand>
        <name>Mg(2+)</name>
        <dbReference type="ChEBI" id="CHEBI:18420"/>
    </ligand>
</feature>
<feature type="modified residue" description="Phosphoserine" evidence="1">
    <location>
        <position position="103"/>
    </location>
</feature>
<dbReference type="EC" id="5.4.2.10" evidence="1"/>
<dbReference type="EMBL" id="CP000413">
    <property type="protein sequence ID" value="ABJ60649.1"/>
    <property type="molecule type" value="Genomic_DNA"/>
</dbReference>
<dbReference type="RefSeq" id="WP_003647032.1">
    <property type="nucleotide sequence ID" value="NZ_WBMG01000002.1"/>
</dbReference>
<dbReference type="SMR" id="Q042H3"/>
<dbReference type="GeneID" id="48925286"/>
<dbReference type="KEGG" id="lga:LGAS_1286"/>
<dbReference type="HOGENOM" id="CLU_016950_7_0_9"/>
<dbReference type="BioCyc" id="LGAS324831:G1G6Y-1281-MONOMER"/>
<dbReference type="Proteomes" id="UP000000664">
    <property type="component" value="Chromosome"/>
</dbReference>
<dbReference type="GO" id="GO:0005829">
    <property type="term" value="C:cytosol"/>
    <property type="evidence" value="ECO:0007669"/>
    <property type="project" value="TreeGrafter"/>
</dbReference>
<dbReference type="GO" id="GO:0000287">
    <property type="term" value="F:magnesium ion binding"/>
    <property type="evidence" value="ECO:0007669"/>
    <property type="project" value="UniProtKB-UniRule"/>
</dbReference>
<dbReference type="GO" id="GO:0008966">
    <property type="term" value="F:phosphoglucosamine mutase activity"/>
    <property type="evidence" value="ECO:0007669"/>
    <property type="project" value="UniProtKB-UniRule"/>
</dbReference>
<dbReference type="GO" id="GO:0004615">
    <property type="term" value="F:phosphomannomutase activity"/>
    <property type="evidence" value="ECO:0007669"/>
    <property type="project" value="TreeGrafter"/>
</dbReference>
<dbReference type="GO" id="GO:0005975">
    <property type="term" value="P:carbohydrate metabolic process"/>
    <property type="evidence" value="ECO:0007669"/>
    <property type="project" value="InterPro"/>
</dbReference>
<dbReference type="GO" id="GO:0009252">
    <property type="term" value="P:peptidoglycan biosynthetic process"/>
    <property type="evidence" value="ECO:0007669"/>
    <property type="project" value="TreeGrafter"/>
</dbReference>
<dbReference type="GO" id="GO:0006048">
    <property type="term" value="P:UDP-N-acetylglucosamine biosynthetic process"/>
    <property type="evidence" value="ECO:0007669"/>
    <property type="project" value="TreeGrafter"/>
</dbReference>
<dbReference type="CDD" id="cd05802">
    <property type="entry name" value="GlmM"/>
    <property type="match status" value="1"/>
</dbReference>
<dbReference type="FunFam" id="3.30.310.50:FF:000001">
    <property type="entry name" value="Phosphoglucosamine mutase"/>
    <property type="match status" value="1"/>
</dbReference>
<dbReference type="FunFam" id="3.40.120.10:FF:000001">
    <property type="entry name" value="Phosphoglucosamine mutase"/>
    <property type="match status" value="1"/>
</dbReference>
<dbReference type="FunFam" id="3.40.120.10:FF:000002">
    <property type="entry name" value="Phosphoglucosamine mutase"/>
    <property type="match status" value="1"/>
</dbReference>
<dbReference type="Gene3D" id="3.40.120.10">
    <property type="entry name" value="Alpha-D-Glucose-1,6-Bisphosphate, subunit A, domain 3"/>
    <property type="match status" value="3"/>
</dbReference>
<dbReference type="Gene3D" id="3.30.310.50">
    <property type="entry name" value="Alpha-D-phosphohexomutase, C-terminal domain"/>
    <property type="match status" value="1"/>
</dbReference>
<dbReference type="HAMAP" id="MF_01554_B">
    <property type="entry name" value="GlmM_B"/>
    <property type="match status" value="1"/>
</dbReference>
<dbReference type="InterPro" id="IPR005844">
    <property type="entry name" value="A-D-PHexomutase_a/b/a-I"/>
</dbReference>
<dbReference type="InterPro" id="IPR016055">
    <property type="entry name" value="A-D-PHexomutase_a/b/a-I/II/III"/>
</dbReference>
<dbReference type="InterPro" id="IPR005845">
    <property type="entry name" value="A-D-PHexomutase_a/b/a-II"/>
</dbReference>
<dbReference type="InterPro" id="IPR005846">
    <property type="entry name" value="A-D-PHexomutase_a/b/a-III"/>
</dbReference>
<dbReference type="InterPro" id="IPR005843">
    <property type="entry name" value="A-D-PHexomutase_C"/>
</dbReference>
<dbReference type="InterPro" id="IPR036900">
    <property type="entry name" value="A-D-PHexomutase_C_sf"/>
</dbReference>
<dbReference type="InterPro" id="IPR016066">
    <property type="entry name" value="A-D-PHexomutase_CS"/>
</dbReference>
<dbReference type="InterPro" id="IPR005841">
    <property type="entry name" value="Alpha-D-phosphohexomutase_SF"/>
</dbReference>
<dbReference type="InterPro" id="IPR006352">
    <property type="entry name" value="GlmM_bact"/>
</dbReference>
<dbReference type="InterPro" id="IPR050060">
    <property type="entry name" value="Phosphoglucosamine_mutase"/>
</dbReference>
<dbReference type="NCBIfam" id="TIGR01455">
    <property type="entry name" value="glmM"/>
    <property type="match status" value="1"/>
</dbReference>
<dbReference type="NCBIfam" id="NF008139">
    <property type="entry name" value="PRK10887.1"/>
    <property type="match status" value="1"/>
</dbReference>
<dbReference type="PANTHER" id="PTHR42946:SF1">
    <property type="entry name" value="PHOSPHOGLUCOMUTASE (ALPHA-D-GLUCOSE-1,6-BISPHOSPHATE-DEPENDENT)"/>
    <property type="match status" value="1"/>
</dbReference>
<dbReference type="PANTHER" id="PTHR42946">
    <property type="entry name" value="PHOSPHOHEXOSE MUTASE"/>
    <property type="match status" value="1"/>
</dbReference>
<dbReference type="Pfam" id="PF02878">
    <property type="entry name" value="PGM_PMM_I"/>
    <property type="match status" value="1"/>
</dbReference>
<dbReference type="Pfam" id="PF02879">
    <property type="entry name" value="PGM_PMM_II"/>
    <property type="match status" value="1"/>
</dbReference>
<dbReference type="Pfam" id="PF02880">
    <property type="entry name" value="PGM_PMM_III"/>
    <property type="match status" value="1"/>
</dbReference>
<dbReference type="Pfam" id="PF00408">
    <property type="entry name" value="PGM_PMM_IV"/>
    <property type="match status" value="1"/>
</dbReference>
<dbReference type="PRINTS" id="PR00509">
    <property type="entry name" value="PGMPMM"/>
</dbReference>
<dbReference type="SUPFAM" id="SSF55957">
    <property type="entry name" value="Phosphoglucomutase, C-terminal domain"/>
    <property type="match status" value="1"/>
</dbReference>
<dbReference type="SUPFAM" id="SSF53738">
    <property type="entry name" value="Phosphoglucomutase, first 3 domains"/>
    <property type="match status" value="3"/>
</dbReference>
<dbReference type="PROSITE" id="PS00710">
    <property type="entry name" value="PGM_PMM"/>
    <property type="match status" value="1"/>
</dbReference>
<comment type="function">
    <text evidence="1">Catalyzes the conversion of glucosamine-6-phosphate to glucosamine-1-phosphate.</text>
</comment>
<comment type="catalytic activity">
    <reaction evidence="1">
        <text>alpha-D-glucosamine 1-phosphate = D-glucosamine 6-phosphate</text>
        <dbReference type="Rhea" id="RHEA:23424"/>
        <dbReference type="ChEBI" id="CHEBI:58516"/>
        <dbReference type="ChEBI" id="CHEBI:58725"/>
        <dbReference type="EC" id="5.4.2.10"/>
    </reaction>
</comment>
<comment type="cofactor">
    <cofactor evidence="1">
        <name>Mg(2+)</name>
        <dbReference type="ChEBI" id="CHEBI:18420"/>
    </cofactor>
    <text evidence="1">Binds 1 Mg(2+) ion per subunit.</text>
</comment>
<comment type="PTM">
    <text evidence="1">Activated by phosphorylation.</text>
</comment>
<comment type="similarity">
    <text evidence="1">Belongs to the phosphohexose mutase family.</text>
</comment>
<accession>Q042H3</accession>
<keyword id="KW-0413">Isomerase</keyword>
<keyword id="KW-0460">Magnesium</keyword>
<keyword id="KW-0479">Metal-binding</keyword>
<keyword id="KW-0597">Phosphoprotein</keyword>
<reference key="1">
    <citation type="journal article" date="2006" name="Proc. Natl. Acad. Sci. U.S.A.">
        <title>Comparative genomics of the lactic acid bacteria.</title>
        <authorList>
            <person name="Makarova K.S."/>
            <person name="Slesarev A."/>
            <person name="Wolf Y.I."/>
            <person name="Sorokin A."/>
            <person name="Mirkin B."/>
            <person name="Koonin E.V."/>
            <person name="Pavlov A."/>
            <person name="Pavlova N."/>
            <person name="Karamychev V."/>
            <person name="Polouchine N."/>
            <person name="Shakhova V."/>
            <person name="Grigoriev I."/>
            <person name="Lou Y."/>
            <person name="Rohksar D."/>
            <person name="Lucas S."/>
            <person name="Huang K."/>
            <person name="Goodstein D.M."/>
            <person name="Hawkins T."/>
            <person name="Plengvidhya V."/>
            <person name="Welker D."/>
            <person name="Hughes J."/>
            <person name="Goh Y."/>
            <person name="Benson A."/>
            <person name="Baldwin K."/>
            <person name="Lee J.-H."/>
            <person name="Diaz-Muniz I."/>
            <person name="Dosti B."/>
            <person name="Smeianov V."/>
            <person name="Wechter W."/>
            <person name="Barabote R."/>
            <person name="Lorca G."/>
            <person name="Altermann E."/>
            <person name="Barrangou R."/>
            <person name="Ganesan B."/>
            <person name="Xie Y."/>
            <person name="Rawsthorne H."/>
            <person name="Tamir D."/>
            <person name="Parker C."/>
            <person name="Breidt F."/>
            <person name="Broadbent J.R."/>
            <person name="Hutkins R."/>
            <person name="O'Sullivan D."/>
            <person name="Steele J."/>
            <person name="Unlu G."/>
            <person name="Saier M.H. Jr."/>
            <person name="Klaenhammer T."/>
            <person name="Richardson P."/>
            <person name="Kozyavkin S."/>
            <person name="Weimer B.C."/>
            <person name="Mills D.A."/>
        </authorList>
    </citation>
    <scope>NUCLEOTIDE SEQUENCE [LARGE SCALE GENOMIC DNA]</scope>
    <source>
        <strain>ATCC 33323 / DSM 20243 / BCRC 14619 / CIP 102991 / JCM 1131 / KCTC 3163 / NCIMB 11718 / NCTC 13722 / AM63</strain>
    </source>
</reference>